<name>B2MG_CALPI</name>
<sequence length="119" mass="13552">MASSVVVALLVLLSLSGLEAIQHAPKIQVYSRHPAENGKPNFLNCYVSGFHPSDIEVDLLKNGKKIEKVEHSDLSFSKDWSFYLLYYTEFTPSEKDEYACRVSHVTFSTPKTVKWDRNI</sequence>
<reference key="1">
    <citation type="journal article" date="1999" name="Mol. Phylogenet. Evol.">
        <title>Molecular phylogeny of new world primates (Platyrrhini) based on beta2-microglobulin DNA sequences.</title>
        <authorList>
            <person name="Canavez F.C."/>
            <person name="Moreira M.A."/>
            <person name="Ladasky J.J."/>
            <person name="Pissinatti A."/>
            <person name="Parham P."/>
            <person name="Seuanez H.N."/>
        </authorList>
    </citation>
    <scope>NUCLEOTIDE SEQUENCE [GENOMIC DNA]</scope>
</reference>
<feature type="signal peptide" evidence="1">
    <location>
        <begin position="1"/>
        <end position="20"/>
    </location>
</feature>
<feature type="chain" id="PRO_0000018767" description="Beta-2-microglobulin">
    <location>
        <begin position="21"/>
        <end position="119"/>
    </location>
</feature>
<feature type="domain" description="Ig-like C1-type">
    <location>
        <begin position="25"/>
        <end position="114"/>
    </location>
</feature>
<feature type="disulfide bond" evidence="2">
    <location>
        <begin position="45"/>
        <end position="100"/>
    </location>
</feature>
<evidence type="ECO:0000250" key="1"/>
<evidence type="ECO:0000255" key="2">
    <source>
        <dbReference type="PROSITE-ProRule" id="PRU00114"/>
    </source>
</evidence>
<evidence type="ECO:0000305" key="3"/>
<accession>Q71UN5</accession>
<proteinExistence type="inferred from homology"/>
<organism>
    <name type="scientific">Callithrix penicillata</name>
    <name type="common">Black-pencilled marmoset</name>
    <dbReference type="NCBI Taxonomy" id="57378"/>
    <lineage>
        <taxon>Eukaryota</taxon>
        <taxon>Metazoa</taxon>
        <taxon>Chordata</taxon>
        <taxon>Craniata</taxon>
        <taxon>Vertebrata</taxon>
        <taxon>Euteleostomi</taxon>
        <taxon>Mammalia</taxon>
        <taxon>Eutheria</taxon>
        <taxon>Euarchontoglires</taxon>
        <taxon>Primates</taxon>
        <taxon>Haplorrhini</taxon>
        <taxon>Platyrrhini</taxon>
        <taxon>Cebidae</taxon>
        <taxon>Callitrichinae</taxon>
        <taxon>Callithrix</taxon>
        <taxon>Callithrix</taxon>
    </lineage>
</organism>
<keyword id="KW-1015">Disulfide bond</keyword>
<keyword id="KW-0391">Immunity</keyword>
<keyword id="KW-0393">Immunoglobulin domain</keyword>
<keyword id="KW-0490">MHC I</keyword>
<keyword id="KW-0964">Secreted</keyword>
<keyword id="KW-0732">Signal</keyword>
<dbReference type="EMBL" id="AF068767">
    <property type="protein sequence ID" value="AAD17566.1"/>
    <property type="molecule type" value="Genomic_DNA"/>
</dbReference>
<dbReference type="EMBL" id="AF068766">
    <property type="protein sequence ID" value="AAD17566.1"/>
    <property type="status" value="JOINED"/>
    <property type="molecule type" value="Genomic_DNA"/>
</dbReference>
<dbReference type="SMR" id="Q71UN5"/>
<dbReference type="GO" id="GO:0005576">
    <property type="term" value="C:extracellular region"/>
    <property type="evidence" value="ECO:0007669"/>
    <property type="project" value="UniProtKB-SubCell"/>
</dbReference>
<dbReference type="GO" id="GO:0042612">
    <property type="term" value="C:MHC class I protein complex"/>
    <property type="evidence" value="ECO:0007669"/>
    <property type="project" value="UniProtKB-KW"/>
</dbReference>
<dbReference type="GO" id="GO:0002474">
    <property type="term" value="P:antigen processing and presentation of peptide antigen via MHC class I"/>
    <property type="evidence" value="ECO:0007669"/>
    <property type="project" value="UniProtKB-KW"/>
</dbReference>
<dbReference type="GO" id="GO:0006955">
    <property type="term" value="P:immune response"/>
    <property type="evidence" value="ECO:0007669"/>
    <property type="project" value="InterPro"/>
</dbReference>
<dbReference type="CDD" id="cd05770">
    <property type="entry name" value="IgC1_beta2m"/>
    <property type="match status" value="1"/>
</dbReference>
<dbReference type="FunFam" id="2.60.40.10:FF:001005">
    <property type="entry name" value="Beta-2-microglobulin"/>
    <property type="match status" value="1"/>
</dbReference>
<dbReference type="Gene3D" id="2.60.40.10">
    <property type="entry name" value="Immunoglobulins"/>
    <property type="match status" value="1"/>
</dbReference>
<dbReference type="InterPro" id="IPR015707">
    <property type="entry name" value="B2Microglobulin"/>
</dbReference>
<dbReference type="InterPro" id="IPR007110">
    <property type="entry name" value="Ig-like_dom"/>
</dbReference>
<dbReference type="InterPro" id="IPR036179">
    <property type="entry name" value="Ig-like_dom_sf"/>
</dbReference>
<dbReference type="InterPro" id="IPR013783">
    <property type="entry name" value="Ig-like_fold"/>
</dbReference>
<dbReference type="InterPro" id="IPR003006">
    <property type="entry name" value="Ig/MHC_CS"/>
</dbReference>
<dbReference type="InterPro" id="IPR003597">
    <property type="entry name" value="Ig_C1-set"/>
</dbReference>
<dbReference type="InterPro" id="IPR050160">
    <property type="entry name" value="MHC/Immunoglobulin"/>
</dbReference>
<dbReference type="PANTHER" id="PTHR19944:SF62">
    <property type="entry name" value="BETA-2-MICROGLOBULIN"/>
    <property type="match status" value="1"/>
</dbReference>
<dbReference type="PANTHER" id="PTHR19944">
    <property type="entry name" value="MHC CLASS II-RELATED"/>
    <property type="match status" value="1"/>
</dbReference>
<dbReference type="Pfam" id="PF07654">
    <property type="entry name" value="C1-set"/>
    <property type="match status" value="1"/>
</dbReference>
<dbReference type="SMART" id="SM00407">
    <property type="entry name" value="IGc1"/>
    <property type="match status" value="1"/>
</dbReference>
<dbReference type="SUPFAM" id="SSF48726">
    <property type="entry name" value="Immunoglobulin"/>
    <property type="match status" value="1"/>
</dbReference>
<dbReference type="PROSITE" id="PS50835">
    <property type="entry name" value="IG_LIKE"/>
    <property type="match status" value="1"/>
</dbReference>
<dbReference type="PROSITE" id="PS00290">
    <property type="entry name" value="IG_MHC"/>
    <property type="match status" value="1"/>
</dbReference>
<gene>
    <name type="primary">B2M</name>
</gene>
<protein>
    <recommendedName>
        <fullName>Beta-2-microglobulin</fullName>
    </recommendedName>
</protein>
<comment type="function">
    <text evidence="1">Component of the class I major histocompatibility complex (MHC). Involved in the presentation of peptide antigens to the immune system (By similarity).</text>
</comment>
<comment type="subunit">
    <text evidence="1">Heterodimer of an alpha chain and a beta chain. Beta-2-microglobulin is the beta-chain of major histocompatibility complex class I molecules (By similarity).</text>
</comment>
<comment type="subcellular location">
    <subcellularLocation>
        <location evidence="1">Secreted</location>
    </subcellularLocation>
</comment>
<comment type="similarity">
    <text evidence="3">Belongs to the beta-2-microglobulin family.</text>
</comment>